<feature type="chain" id="PRO_0000172579" description="Phosphatidylglycerol--prolipoprotein diacylglyceryl transferase">
    <location>
        <begin position="1"/>
        <end position="296"/>
    </location>
</feature>
<feature type="transmembrane region" description="Helical" evidence="1">
    <location>
        <begin position="28"/>
        <end position="48"/>
    </location>
</feature>
<feature type="transmembrane region" description="Helical" evidence="1">
    <location>
        <begin position="72"/>
        <end position="92"/>
    </location>
</feature>
<feature type="transmembrane region" description="Helical" evidence="1">
    <location>
        <begin position="110"/>
        <end position="130"/>
    </location>
</feature>
<feature type="transmembrane region" description="Helical" evidence="1">
    <location>
        <begin position="139"/>
        <end position="159"/>
    </location>
</feature>
<feature type="transmembrane region" description="Helical" evidence="1">
    <location>
        <begin position="197"/>
        <end position="217"/>
    </location>
</feature>
<feature type="transmembrane region" description="Helical" evidence="1">
    <location>
        <begin position="226"/>
        <end position="246"/>
    </location>
</feature>
<feature type="transmembrane region" description="Helical" evidence="1">
    <location>
        <begin position="263"/>
        <end position="283"/>
    </location>
</feature>
<feature type="binding site" evidence="1">
    <location>
        <position position="160"/>
    </location>
    <ligand>
        <name>a 1,2-diacyl-sn-glycero-3-phospho-(1'-sn-glycerol)</name>
        <dbReference type="ChEBI" id="CHEBI:64716"/>
    </ligand>
</feature>
<organism>
    <name type="scientific">Chlamydia caviae (strain ATCC VR-813 / DSM 19441 / 03DC25 / GPIC)</name>
    <name type="common">Chlamydophila caviae</name>
    <dbReference type="NCBI Taxonomy" id="227941"/>
    <lineage>
        <taxon>Bacteria</taxon>
        <taxon>Pseudomonadati</taxon>
        <taxon>Chlamydiota</taxon>
        <taxon>Chlamydiia</taxon>
        <taxon>Chlamydiales</taxon>
        <taxon>Chlamydiaceae</taxon>
        <taxon>Chlamydia/Chlamydophila group</taxon>
        <taxon>Chlamydia</taxon>
    </lineage>
</organism>
<accession>Q823E7</accession>
<sequence>MRIFLSAIYWNHSKFLWNSENWPIKVPWYGLCFSLGILFASLLGIYLAKSSYNSEDEKNFSKEQLSGALENFALYSLLFIIPGSRIAYILFYGGDFYFKHPREILKVWNGGLASHGGMLGLILWALIFSWRYRKKISVLTFLFLCDLCASVFGCAAFMIRIGNFMNQEIVGKPTSLPWGIIFSSPAQGVLGVPVHPVQLYEGMSYLLLSIILFFLSYKRYFRLGSGWVTSLGLVGISLIRFFAEFFKSHQGKVIGPNSPLTMGQILSFPLFVFGLCLGIACFLKNKKKRSPTSSVK</sequence>
<comment type="function">
    <text evidence="1">Catalyzes the transfer of the diacylglyceryl group from phosphatidylglycerol to the sulfhydryl group of the N-terminal cysteine of a prolipoprotein, the first step in the formation of mature lipoproteins.</text>
</comment>
<comment type="catalytic activity">
    <reaction evidence="1">
        <text>L-cysteinyl-[prolipoprotein] + a 1,2-diacyl-sn-glycero-3-phospho-(1'-sn-glycerol) = an S-1,2-diacyl-sn-glyceryl-L-cysteinyl-[prolipoprotein] + sn-glycerol 1-phosphate + H(+)</text>
        <dbReference type="Rhea" id="RHEA:56712"/>
        <dbReference type="Rhea" id="RHEA-COMP:14679"/>
        <dbReference type="Rhea" id="RHEA-COMP:14680"/>
        <dbReference type="ChEBI" id="CHEBI:15378"/>
        <dbReference type="ChEBI" id="CHEBI:29950"/>
        <dbReference type="ChEBI" id="CHEBI:57685"/>
        <dbReference type="ChEBI" id="CHEBI:64716"/>
        <dbReference type="ChEBI" id="CHEBI:140658"/>
        <dbReference type="EC" id="2.5.1.145"/>
    </reaction>
</comment>
<comment type="pathway">
    <text evidence="1">Protein modification; lipoprotein biosynthesis (diacylglyceryl transfer).</text>
</comment>
<comment type="subcellular location">
    <subcellularLocation>
        <location evidence="1">Cell inner membrane</location>
        <topology evidence="1">Multi-pass membrane protein</topology>
    </subcellularLocation>
</comment>
<comment type="similarity">
    <text evidence="1">Belongs to the Lgt family.</text>
</comment>
<proteinExistence type="inferred from homology"/>
<name>LGT_CHLCV</name>
<evidence type="ECO:0000255" key="1">
    <source>
        <dbReference type="HAMAP-Rule" id="MF_01147"/>
    </source>
</evidence>
<protein>
    <recommendedName>
        <fullName evidence="1">Phosphatidylglycerol--prolipoprotein diacylglyceryl transferase</fullName>
        <ecNumber evidence="1">2.5.1.145</ecNumber>
    </recommendedName>
</protein>
<reference key="1">
    <citation type="journal article" date="2003" name="Nucleic Acids Res.">
        <title>Genome sequence of Chlamydophila caviae (Chlamydia psittaci GPIC): examining the role of niche-specific genes in the evolution of the Chlamydiaceae.</title>
        <authorList>
            <person name="Read T.D."/>
            <person name="Myers G.S.A."/>
            <person name="Brunham R.C."/>
            <person name="Nelson W.C."/>
            <person name="Paulsen I.T."/>
            <person name="Heidelberg J.F."/>
            <person name="Holtzapple E.K."/>
            <person name="Khouri H.M."/>
            <person name="Federova N.B."/>
            <person name="Carty H.A."/>
            <person name="Umayam L.A."/>
            <person name="Haft D.H."/>
            <person name="Peterson J.D."/>
            <person name="Beanan M.J."/>
            <person name="White O."/>
            <person name="Salzberg S.L."/>
            <person name="Hsia R.-C."/>
            <person name="McClarty G."/>
            <person name="Rank R.G."/>
            <person name="Bavoil P.M."/>
            <person name="Fraser C.M."/>
        </authorList>
    </citation>
    <scope>NUCLEOTIDE SEQUENCE [LARGE SCALE GENOMIC DNA]</scope>
    <source>
        <strain>ATCC VR-813 / DSM 19441 / 03DC25 / GPIC</strain>
    </source>
</reference>
<gene>
    <name evidence="1" type="primary">lgt</name>
    <name type="ordered locus">CCA_00471</name>
</gene>
<dbReference type="EC" id="2.5.1.145" evidence="1"/>
<dbReference type="EMBL" id="AE015925">
    <property type="protein sequence ID" value="AAP05216.1"/>
    <property type="molecule type" value="Genomic_DNA"/>
</dbReference>
<dbReference type="RefSeq" id="WP_011006432.1">
    <property type="nucleotide sequence ID" value="NC_003361.3"/>
</dbReference>
<dbReference type="SMR" id="Q823E7"/>
<dbReference type="STRING" id="227941.CCA_00471"/>
<dbReference type="KEGG" id="cca:CCA_00471"/>
<dbReference type="eggNOG" id="COG0682">
    <property type="taxonomic scope" value="Bacteria"/>
</dbReference>
<dbReference type="HOGENOM" id="CLU_013386_1_0_0"/>
<dbReference type="OrthoDB" id="871140at2"/>
<dbReference type="UniPathway" id="UPA00664"/>
<dbReference type="Proteomes" id="UP000002193">
    <property type="component" value="Chromosome"/>
</dbReference>
<dbReference type="GO" id="GO:0005886">
    <property type="term" value="C:plasma membrane"/>
    <property type="evidence" value="ECO:0007669"/>
    <property type="project" value="UniProtKB-SubCell"/>
</dbReference>
<dbReference type="GO" id="GO:0008961">
    <property type="term" value="F:phosphatidylglycerol-prolipoprotein diacylglyceryl transferase activity"/>
    <property type="evidence" value="ECO:0007669"/>
    <property type="project" value="UniProtKB-UniRule"/>
</dbReference>
<dbReference type="GO" id="GO:0042158">
    <property type="term" value="P:lipoprotein biosynthetic process"/>
    <property type="evidence" value="ECO:0007669"/>
    <property type="project" value="UniProtKB-UniRule"/>
</dbReference>
<dbReference type="HAMAP" id="MF_01147">
    <property type="entry name" value="Lgt"/>
    <property type="match status" value="1"/>
</dbReference>
<dbReference type="InterPro" id="IPR001640">
    <property type="entry name" value="Lgt"/>
</dbReference>
<dbReference type="NCBIfam" id="TIGR00544">
    <property type="entry name" value="lgt"/>
    <property type="match status" value="1"/>
</dbReference>
<dbReference type="NCBIfam" id="NF000775">
    <property type="entry name" value="PRK00052.2-5"/>
    <property type="match status" value="1"/>
</dbReference>
<dbReference type="PANTHER" id="PTHR30589:SF0">
    <property type="entry name" value="PHOSPHATIDYLGLYCEROL--PROLIPOPROTEIN DIACYLGLYCERYL TRANSFERASE"/>
    <property type="match status" value="1"/>
</dbReference>
<dbReference type="PANTHER" id="PTHR30589">
    <property type="entry name" value="PROLIPOPROTEIN DIACYLGLYCERYL TRANSFERASE"/>
    <property type="match status" value="1"/>
</dbReference>
<dbReference type="Pfam" id="PF01790">
    <property type="entry name" value="LGT"/>
    <property type="match status" value="1"/>
</dbReference>
<dbReference type="PROSITE" id="PS01311">
    <property type="entry name" value="LGT"/>
    <property type="match status" value="1"/>
</dbReference>
<keyword id="KW-0997">Cell inner membrane</keyword>
<keyword id="KW-1003">Cell membrane</keyword>
<keyword id="KW-0472">Membrane</keyword>
<keyword id="KW-0808">Transferase</keyword>
<keyword id="KW-0812">Transmembrane</keyword>
<keyword id="KW-1133">Transmembrane helix</keyword>